<dbReference type="EMBL" id="AF091237">
    <property type="protein sequence ID" value="AAG00066.1"/>
    <property type="molecule type" value="Genomic_DNA"/>
</dbReference>
<dbReference type="SMR" id="Q9DGQ7"/>
<dbReference type="GO" id="GO:0005737">
    <property type="term" value="C:cytoplasm"/>
    <property type="evidence" value="ECO:0007669"/>
    <property type="project" value="UniProtKB-SubCell"/>
</dbReference>
<dbReference type="GO" id="GO:0031072">
    <property type="term" value="F:heat shock protein binding"/>
    <property type="evidence" value="ECO:0007669"/>
    <property type="project" value="TreeGrafter"/>
</dbReference>
<dbReference type="GO" id="GO:0019901">
    <property type="term" value="F:protein kinase binding"/>
    <property type="evidence" value="ECO:0007669"/>
    <property type="project" value="InterPro"/>
</dbReference>
<dbReference type="GO" id="GO:0051087">
    <property type="term" value="F:protein-folding chaperone binding"/>
    <property type="evidence" value="ECO:0007669"/>
    <property type="project" value="TreeGrafter"/>
</dbReference>
<dbReference type="GO" id="GO:0051082">
    <property type="term" value="F:unfolded protein binding"/>
    <property type="evidence" value="ECO:0007669"/>
    <property type="project" value="TreeGrafter"/>
</dbReference>
<dbReference type="GO" id="GO:0006457">
    <property type="term" value="P:protein folding"/>
    <property type="evidence" value="ECO:0007669"/>
    <property type="project" value="TreeGrafter"/>
</dbReference>
<dbReference type="GO" id="GO:0050821">
    <property type="term" value="P:protein stabilization"/>
    <property type="evidence" value="ECO:0007669"/>
    <property type="project" value="TreeGrafter"/>
</dbReference>
<dbReference type="FunFam" id="1.20.58.610:FF:000001">
    <property type="entry name" value="Hsp90 co-chaperone Cdc37-like 1"/>
    <property type="match status" value="1"/>
</dbReference>
<dbReference type="Gene3D" id="6.10.140.250">
    <property type="match status" value="1"/>
</dbReference>
<dbReference type="Gene3D" id="1.20.58.610">
    <property type="entry name" value="Cdc37, Hsp90 binding domain"/>
    <property type="match status" value="1"/>
</dbReference>
<dbReference type="InterPro" id="IPR004918">
    <property type="entry name" value="Cdc37"/>
</dbReference>
<dbReference type="InterPro" id="IPR013873">
    <property type="entry name" value="Cdc37_C"/>
</dbReference>
<dbReference type="InterPro" id="IPR013874">
    <property type="entry name" value="Cdc37_Hsp90-bd"/>
</dbReference>
<dbReference type="InterPro" id="IPR038189">
    <property type="entry name" value="Cdc37_Hsp90-bd_sf"/>
</dbReference>
<dbReference type="InterPro" id="IPR013855">
    <property type="entry name" value="Cdc37_N_dom"/>
</dbReference>
<dbReference type="PANTHER" id="PTHR12800">
    <property type="entry name" value="CDC37-RELATED"/>
    <property type="match status" value="1"/>
</dbReference>
<dbReference type="PANTHER" id="PTHR12800:SF3">
    <property type="entry name" value="HSP90 CO-CHAPERONE CDC37"/>
    <property type="match status" value="1"/>
</dbReference>
<dbReference type="Pfam" id="PF08564">
    <property type="entry name" value="CDC37_C"/>
    <property type="match status" value="1"/>
</dbReference>
<dbReference type="Pfam" id="PF08565">
    <property type="entry name" value="CDC37_M"/>
    <property type="match status" value="1"/>
</dbReference>
<dbReference type="Pfam" id="PF03234">
    <property type="entry name" value="CDC37_N"/>
    <property type="match status" value="1"/>
</dbReference>
<dbReference type="SMART" id="SM01069">
    <property type="entry name" value="CDC37_C"/>
    <property type="match status" value="1"/>
</dbReference>
<dbReference type="SMART" id="SM01070">
    <property type="entry name" value="CDC37_M"/>
    <property type="match status" value="1"/>
</dbReference>
<dbReference type="SMART" id="SM01071">
    <property type="entry name" value="CDC37_N"/>
    <property type="match status" value="1"/>
</dbReference>
<dbReference type="SUPFAM" id="SSF101391">
    <property type="entry name" value="Hsp90 co-chaperone CDC37"/>
    <property type="match status" value="1"/>
</dbReference>
<feature type="chain" id="PRO_0000195061" description="Hsp90 co-chaperone Cdc37">
    <location>
        <begin position="1"/>
        <end position="377"/>
    </location>
</feature>
<feature type="region of interest" description="Disordered" evidence="2">
    <location>
        <begin position="339"/>
        <end position="377"/>
    </location>
</feature>
<feature type="compositionally biased region" description="Acidic residues" evidence="2">
    <location>
        <begin position="353"/>
        <end position="362"/>
    </location>
</feature>
<feature type="compositionally biased region" description="Basic and acidic residues" evidence="2">
    <location>
        <begin position="364"/>
        <end position="377"/>
    </location>
</feature>
<accession>Q9DGQ7</accession>
<evidence type="ECO:0000250" key="1"/>
<evidence type="ECO:0000256" key="2">
    <source>
        <dbReference type="SAM" id="MobiDB-lite"/>
    </source>
</evidence>
<evidence type="ECO:0000305" key="3"/>
<proteinExistence type="inferred from homology"/>
<comment type="function">
    <text evidence="1">Co-chaperone that binds to numerous kinases and promotes their interaction with the Hsp90 complex, resulting in stabilization and promotion of their activity.</text>
</comment>
<comment type="subunit">
    <text evidence="1">Forms a complex with Hsp90.</text>
</comment>
<comment type="subcellular location">
    <subcellularLocation>
        <location evidence="1">Cytoplasm</location>
    </subcellularLocation>
</comment>
<comment type="similarity">
    <text evidence="3">Belongs to the CDC37 family.</text>
</comment>
<organism>
    <name type="scientific">Dichotomyctere fluviatilis</name>
    <name type="common">Green pufferfish</name>
    <name type="synonym">Tetraodon fluviatilis</name>
    <dbReference type="NCBI Taxonomy" id="2593188"/>
    <lineage>
        <taxon>Eukaryota</taxon>
        <taxon>Metazoa</taxon>
        <taxon>Chordata</taxon>
        <taxon>Craniata</taxon>
        <taxon>Vertebrata</taxon>
        <taxon>Euteleostomi</taxon>
        <taxon>Actinopterygii</taxon>
        <taxon>Neopterygii</taxon>
        <taxon>Teleostei</taxon>
        <taxon>Neoteleostei</taxon>
        <taxon>Acanthomorphata</taxon>
        <taxon>Eupercaria</taxon>
        <taxon>Tetraodontiformes</taxon>
        <taxon>Tetradontoidea</taxon>
        <taxon>Tetraodontidae</taxon>
        <taxon>Dichotomyctere</taxon>
    </lineage>
</organism>
<keyword id="KW-0143">Chaperone</keyword>
<keyword id="KW-0963">Cytoplasm</keyword>
<sequence>MSRIDYSVWDHIEVSDDEDVSHPNIDTPSLFRWRHQARVERMEDFKKKGDDLNKGLQECRRKLAEAQKKVRELSISAAGDAKAELTKTQTEEKKLKKEERDWARKLEEHNHEEKKMPWNVDTLSKDGFSKSIVNVKADSAEDTEEEKEKKHKTFVERYEKQIKHFGMLHRWDDSQRYLSDNPDLVCEETANYLVIMCIDLEVEEKHALMEQVAHQTIVMQFILELAKSLKVDPRGCFRQFFEKIKTADQQYQDAFNDELESFKERVRGRAKIRIEKAMKEYEEEERQKRLGPGGLDPVEVYESLPPEMQKCFDEKDIQMLQDVITKMDPTEAKAHMKRCIDSGLWVPNSKMDESDEKEDGSTYEEVKQEQEEPAKKE</sequence>
<reference key="1">
    <citation type="journal article" date="2000" name="Biochim. Biophys. Acta">
        <title>Genomic organization and the promoter region of the round-spotted pufferfish (Tetraodon fluviatilis) CDC37 gene.</title>
        <authorList>
            <person name="Tsai S.C."/>
            <person name="Leu J.H."/>
            <person name="Chou C.M."/>
            <person name="Yeh M.S."/>
            <person name="Huang F.L."/>
            <person name="Huang C.J."/>
        </authorList>
    </citation>
    <scope>NUCLEOTIDE SEQUENCE [GENOMIC DNA]</scope>
</reference>
<protein>
    <recommendedName>
        <fullName>Hsp90 co-chaperone Cdc37</fullName>
    </recommendedName>
    <alternativeName>
        <fullName>Hsp90 chaperone protein kinase-targeting subunit</fullName>
    </alternativeName>
    <alternativeName>
        <fullName>p50Cdc37</fullName>
    </alternativeName>
</protein>
<name>CDC37_DICFU</name>
<gene>
    <name type="primary">cdc37</name>
</gene>